<protein>
    <recommendedName>
        <fullName evidence="4">Probable glucomannan 4-beta-mannosyltransferase 9</fullName>
        <ecNumber evidence="1">2.4.1.32</ecNumber>
    </recommendedName>
    <alternativeName>
        <fullName evidence="3">Cellulose synthase-like protein A9</fullName>
        <shortName evidence="3">OsCslA9</shortName>
    </alternativeName>
    <alternativeName>
        <fullName evidence="4">Glucomannan synthase</fullName>
    </alternativeName>
    <alternativeName>
        <fullName evidence="4">Mannan synthase 9</fullName>
    </alternativeName>
</protein>
<reference key="1">
    <citation type="journal article" date="2002" name="Plant Physiol.">
        <title>Cellulose synthase-like genes of rice.</title>
        <authorList>
            <person name="Hazen S.P."/>
            <person name="Scott-Craig J.S."/>
            <person name="Walton J.D."/>
        </authorList>
    </citation>
    <scope>NUCLEOTIDE SEQUENCE [GENOMIC DNA]</scope>
    <scope>GENE FAMILY</scope>
    <scope>NOMENCLATURE</scope>
</reference>
<reference key="2">
    <citation type="journal article" date="2005" name="Nature">
        <title>The map-based sequence of the rice genome.</title>
        <authorList>
            <consortium name="International rice genome sequencing project (IRGSP)"/>
        </authorList>
    </citation>
    <scope>NUCLEOTIDE SEQUENCE [LARGE SCALE GENOMIC DNA]</scope>
    <source>
        <strain>cv. Nipponbare</strain>
    </source>
</reference>
<reference key="3">
    <citation type="journal article" date="2008" name="Nucleic Acids Res.">
        <title>The rice annotation project database (RAP-DB): 2008 update.</title>
        <authorList>
            <consortium name="The rice annotation project (RAP)"/>
        </authorList>
    </citation>
    <scope>GENOME REANNOTATION</scope>
    <source>
        <strain>cv. Nipponbare</strain>
    </source>
</reference>
<reference key="4">
    <citation type="journal article" date="2013" name="Rice">
        <title>Improvement of the Oryza sativa Nipponbare reference genome using next generation sequence and optical map data.</title>
        <authorList>
            <person name="Kawahara Y."/>
            <person name="de la Bastide M."/>
            <person name="Hamilton J.P."/>
            <person name="Kanamori H."/>
            <person name="McCombie W.R."/>
            <person name="Ouyang S."/>
            <person name="Schwartz D.C."/>
            <person name="Tanaka T."/>
            <person name="Wu J."/>
            <person name="Zhou S."/>
            <person name="Childs K.L."/>
            <person name="Davidson R.M."/>
            <person name="Lin H."/>
            <person name="Quesada-Ocampo L."/>
            <person name="Vaillancourt B."/>
            <person name="Sakai H."/>
            <person name="Lee S.S."/>
            <person name="Kim J."/>
            <person name="Numa H."/>
            <person name="Itoh T."/>
            <person name="Buell C.R."/>
            <person name="Matsumoto T."/>
        </authorList>
    </citation>
    <scope>GENOME REANNOTATION</scope>
    <source>
        <strain>cv. Nipponbare</strain>
    </source>
</reference>
<reference key="5">
    <citation type="journal article" date="2005" name="PLoS Biol.">
        <title>The genomes of Oryza sativa: a history of duplications.</title>
        <authorList>
            <person name="Yu J."/>
            <person name="Wang J."/>
            <person name="Lin W."/>
            <person name="Li S."/>
            <person name="Li H."/>
            <person name="Zhou J."/>
            <person name="Ni P."/>
            <person name="Dong W."/>
            <person name="Hu S."/>
            <person name="Zeng C."/>
            <person name="Zhang J."/>
            <person name="Zhang Y."/>
            <person name="Li R."/>
            <person name="Xu Z."/>
            <person name="Li S."/>
            <person name="Li X."/>
            <person name="Zheng H."/>
            <person name="Cong L."/>
            <person name="Lin L."/>
            <person name="Yin J."/>
            <person name="Geng J."/>
            <person name="Li G."/>
            <person name="Shi J."/>
            <person name="Liu J."/>
            <person name="Lv H."/>
            <person name="Li J."/>
            <person name="Wang J."/>
            <person name="Deng Y."/>
            <person name="Ran L."/>
            <person name="Shi X."/>
            <person name="Wang X."/>
            <person name="Wu Q."/>
            <person name="Li C."/>
            <person name="Ren X."/>
            <person name="Wang J."/>
            <person name="Wang X."/>
            <person name="Li D."/>
            <person name="Liu D."/>
            <person name="Zhang X."/>
            <person name="Ji Z."/>
            <person name="Zhao W."/>
            <person name="Sun Y."/>
            <person name="Zhang Z."/>
            <person name="Bao J."/>
            <person name="Han Y."/>
            <person name="Dong L."/>
            <person name="Ji J."/>
            <person name="Chen P."/>
            <person name="Wu S."/>
            <person name="Liu J."/>
            <person name="Xiao Y."/>
            <person name="Bu D."/>
            <person name="Tan J."/>
            <person name="Yang L."/>
            <person name="Ye C."/>
            <person name="Zhang J."/>
            <person name="Xu J."/>
            <person name="Zhou Y."/>
            <person name="Yu Y."/>
            <person name="Zhang B."/>
            <person name="Zhuang S."/>
            <person name="Wei H."/>
            <person name="Liu B."/>
            <person name="Lei M."/>
            <person name="Yu H."/>
            <person name="Li Y."/>
            <person name="Xu H."/>
            <person name="Wei S."/>
            <person name="He X."/>
            <person name="Fang L."/>
            <person name="Zhang Z."/>
            <person name="Zhang Y."/>
            <person name="Huang X."/>
            <person name="Su Z."/>
            <person name="Tong W."/>
            <person name="Li J."/>
            <person name="Tong Z."/>
            <person name="Li S."/>
            <person name="Ye J."/>
            <person name="Wang L."/>
            <person name="Fang L."/>
            <person name="Lei T."/>
            <person name="Chen C.-S."/>
            <person name="Chen H.-C."/>
            <person name="Xu Z."/>
            <person name="Li H."/>
            <person name="Huang H."/>
            <person name="Zhang F."/>
            <person name="Xu H."/>
            <person name="Li N."/>
            <person name="Zhao C."/>
            <person name="Li S."/>
            <person name="Dong L."/>
            <person name="Huang Y."/>
            <person name="Li L."/>
            <person name="Xi Y."/>
            <person name="Qi Q."/>
            <person name="Li W."/>
            <person name="Zhang B."/>
            <person name="Hu W."/>
            <person name="Zhang Y."/>
            <person name="Tian X."/>
            <person name="Jiao Y."/>
            <person name="Liang X."/>
            <person name="Jin J."/>
            <person name="Gao L."/>
            <person name="Zheng W."/>
            <person name="Hao B."/>
            <person name="Liu S.-M."/>
            <person name="Wang W."/>
            <person name="Yuan L."/>
            <person name="Cao M."/>
            <person name="McDermott J."/>
            <person name="Samudrala R."/>
            <person name="Wang J."/>
            <person name="Wong G.K.-S."/>
            <person name="Yang H."/>
        </authorList>
    </citation>
    <scope>NUCLEOTIDE SEQUENCE [LARGE SCALE GENOMIC DNA]</scope>
    <source>
        <strain>cv. Nipponbare</strain>
    </source>
</reference>
<reference key="6">
    <citation type="submission" date="2006-10" db="EMBL/GenBank/DDBJ databases">
        <title>Oryza sativa full length cDNA.</title>
        <authorList>
            <consortium name="The rice full-length cDNA consortium"/>
        </authorList>
    </citation>
    <scope>NUCLEOTIDE SEQUENCE [LARGE SCALE MRNA]</scope>
    <source>
        <strain>cv. Nipponbare</strain>
    </source>
</reference>
<sequence>MAAAGAVLPEQIAAMWEQVKAPVVVPLLRLSVAACLAMSVMLFVEKVYMSVVLVGVHLFGRRPDRRYRCDPIVAAGADNDDPELADANAAFPMVLIQIPMYNEREVYKLSIGAACGLSWPSDRVIVQVLDDSTDPVIKEMVQVECKRWESKGVRIKYEIRDNRVGYKAGALREGMKHGYVRDCDYVAIFDADFQPDPDFLARTIPFLVHNPDIALVQARWKFVNANECLMTRMQEMSLDYHFKVEQEVGSSTHAFFGFNGTAGVWRISAMNEAGGWKDRTTVEDMDLAVRAGLKGWKFVYLGDLMVKSELPSTFKAFRYQQHRWSCGPANLFRKMLVEIATNKKVTLWKKIYVIYNFFLVRKIIGHIVTFVFYCLVVPATVLIPEVEIPRWGYVYLPSIVTILNSIGTPRSLHLLIFWVLFENVMSLHRTKATLIGLLETGRVNEWVVTEKLGDALKLKLPGKAFRRPRMRIGDRVNALELGFSAYLSFCGCYDIAYGKGYYSLFLFLQSITFFIIGVGYVGTIVPH</sequence>
<evidence type="ECO:0000250" key="1">
    <source>
        <dbReference type="UniProtKB" id="Q7PC76"/>
    </source>
</evidence>
<evidence type="ECO:0000255" key="2"/>
<evidence type="ECO:0000303" key="3">
    <source>
    </source>
</evidence>
<evidence type="ECO:0000305" key="4"/>
<evidence type="ECO:0000312" key="5">
    <source>
        <dbReference type="EMBL" id="EEE66045.1"/>
    </source>
</evidence>
<keyword id="KW-0961">Cell wall biogenesis/degradation</keyword>
<keyword id="KW-0328">Glycosyltransferase</keyword>
<keyword id="KW-0333">Golgi apparatus</keyword>
<keyword id="KW-0472">Membrane</keyword>
<keyword id="KW-1185">Reference proteome</keyword>
<keyword id="KW-0808">Transferase</keyword>
<keyword id="KW-0812">Transmembrane</keyword>
<keyword id="KW-1133">Transmembrane helix</keyword>
<accession>Q67VS7</accession>
<accession>B9FQ03</accession>
<accession>Q0DAU5</accession>
<accession>Q944E5</accession>
<gene>
    <name evidence="3" type="primary">CSLA9</name>
    <name type="ordered locus">Os06g0625700</name>
    <name type="ordered locus">LOC_Os06g42020</name>
    <name type="ORF">OsJ_021176</name>
    <name evidence="5" type="ORF">OsJ_22033</name>
    <name type="ORF">OSJNBa0072A21.15</name>
</gene>
<name>CSLA9_ORYSJ</name>
<proteinExistence type="evidence at transcript level"/>
<dbReference type="EC" id="2.4.1.32" evidence="1"/>
<dbReference type="EMBL" id="AF432499">
    <property type="protein sequence ID" value="AAL25128.1"/>
    <property type="molecule type" value="Genomic_DNA"/>
</dbReference>
<dbReference type="EMBL" id="AP004737">
    <property type="protein sequence ID" value="BAD37742.1"/>
    <property type="molecule type" value="Genomic_DNA"/>
</dbReference>
<dbReference type="EMBL" id="AP008212">
    <property type="protein sequence ID" value="BAF20028.2"/>
    <property type="status" value="ALT_SEQ"/>
    <property type="molecule type" value="Genomic_DNA"/>
</dbReference>
<dbReference type="EMBL" id="AP014962">
    <property type="protein sequence ID" value="BAS98696.1"/>
    <property type="molecule type" value="Genomic_DNA"/>
</dbReference>
<dbReference type="EMBL" id="CM000143">
    <property type="protein sequence ID" value="EEE66045.1"/>
    <property type="molecule type" value="Genomic_DNA"/>
</dbReference>
<dbReference type="EMBL" id="AK242831">
    <property type="status" value="NOT_ANNOTATED_CDS"/>
    <property type="molecule type" value="mRNA"/>
</dbReference>
<dbReference type="RefSeq" id="XP_015643705.1">
    <property type="nucleotide sequence ID" value="XM_015788219.1"/>
</dbReference>
<dbReference type="SMR" id="Q67VS7"/>
<dbReference type="FunCoup" id="Q67VS7">
    <property type="interactions" value="21"/>
</dbReference>
<dbReference type="STRING" id="39947.Q67VS7"/>
<dbReference type="CAZy" id="GT2">
    <property type="family name" value="Glycosyltransferase Family 2"/>
</dbReference>
<dbReference type="PaxDb" id="39947-Q67VS7"/>
<dbReference type="EnsemblPlants" id="Os06t0625700-01">
    <property type="protein sequence ID" value="Os06t0625700-01"/>
    <property type="gene ID" value="Os06g0625700"/>
</dbReference>
<dbReference type="Gramene" id="Os06t0625700-01">
    <property type="protein sequence ID" value="Os06t0625700-01"/>
    <property type="gene ID" value="Os06g0625700"/>
</dbReference>
<dbReference type="KEGG" id="dosa:Os06g0625700"/>
<dbReference type="eggNOG" id="ENOG502QR7J">
    <property type="taxonomic scope" value="Eukaryota"/>
</dbReference>
<dbReference type="HOGENOM" id="CLU_012856_2_0_1"/>
<dbReference type="InParanoid" id="Q67VS7"/>
<dbReference type="OMA" id="GQIELIW"/>
<dbReference type="OrthoDB" id="72851at2759"/>
<dbReference type="Proteomes" id="UP000000763">
    <property type="component" value="Chromosome 6"/>
</dbReference>
<dbReference type="Proteomes" id="UP000007752">
    <property type="component" value="Chromosome 6"/>
</dbReference>
<dbReference type="Proteomes" id="UP000059680">
    <property type="component" value="Chromosome 6"/>
</dbReference>
<dbReference type="GO" id="GO:0005794">
    <property type="term" value="C:Golgi apparatus"/>
    <property type="evidence" value="ECO:0000318"/>
    <property type="project" value="GO_Central"/>
</dbReference>
<dbReference type="GO" id="GO:0000139">
    <property type="term" value="C:Golgi membrane"/>
    <property type="evidence" value="ECO:0007669"/>
    <property type="project" value="UniProtKB-SubCell"/>
</dbReference>
<dbReference type="GO" id="GO:0047259">
    <property type="term" value="F:glucomannan 4-beta-mannosyltransferase activity"/>
    <property type="evidence" value="ECO:0007669"/>
    <property type="project" value="UniProtKB-EC"/>
</dbReference>
<dbReference type="GO" id="GO:0051753">
    <property type="term" value="F:mannan synthase activity"/>
    <property type="evidence" value="ECO:0000318"/>
    <property type="project" value="GO_Central"/>
</dbReference>
<dbReference type="GO" id="GO:0071555">
    <property type="term" value="P:cell wall organization"/>
    <property type="evidence" value="ECO:0007669"/>
    <property type="project" value="UniProtKB-KW"/>
</dbReference>
<dbReference type="CDD" id="cd06437">
    <property type="entry name" value="CESA_CaSu_A2"/>
    <property type="match status" value="1"/>
</dbReference>
<dbReference type="FunFam" id="3.90.550.10:FF:000015">
    <property type="entry name" value="Glucomannan 4-beta-mannosyltransferase 9"/>
    <property type="match status" value="1"/>
</dbReference>
<dbReference type="Gene3D" id="3.90.550.10">
    <property type="entry name" value="Spore Coat Polysaccharide Biosynthesis Protein SpsA, Chain A"/>
    <property type="match status" value="1"/>
</dbReference>
<dbReference type="InterPro" id="IPR001173">
    <property type="entry name" value="Glyco_trans_2-like"/>
</dbReference>
<dbReference type="InterPro" id="IPR029044">
    <property type="entry name" value="Nucleotide-diphossugar_trans"/>
</dbReference>
<dbReference type="PANTHER" id="PTHR32044">
    <property type="entry name" value="GLUCOMANNAN 4-BETA-MANNOSYLTRANSFERASE 9"/>
    <property type="match status" value="1"/>
</dbReference>
<dbReference type="PANTHER" id="PTHR32044:SF77">
    <property type="entry name" value="GLUCOMANNAN 4-BETA-MANNOSYLTRANSFERASE 9"/>
    <property type="match status" value="1"/>
</dbReference>
<dbReference type="Pfam" id="PF13632">
    <property type="entry name" value="Glyco_trans_2_3"/>
    <property type="match status" value="1"/>
</dbReference>
<dbReference type="SUPFAM" id="SSF53448">
    <property type="entry name" value="Nucleotide-diphospho-sugar transferases"/>
    <property type="match status" value="1"/>
</dbReference>
<organism>
    <name type="scientific">Oryza sativa subsp. japonica</name>
    <name type="common">Rice</name>
    <dbReference type="NCBI Taxonomy" id="39947"/>
    <lineage>
        <taxon>Eukaryota</taxon>
        <taxon>Viridiplantae</taxon>
        <taxon>Streptophyta</taxon>
        <taxon>Embryophyta</taxon>
        <taxon>Tracheophyta</taxon>
        <taxon>Spermatophyta</taxon>
        <taxon>Magnoliopsida</taxon>
        <taxon>Liliopsida</taxon>
        <taxon>Poales</taxon>
        <taxon>Poaceae</taxon>
        <taxon>BOP clade</taxon>
        <taxon>Oryzoideae</taxon>
        <taxon>Oryzeae</taxon>
        <taxon>Oryzinae</taxon>
        <taxon>Oryza</taxon>
        <taxon>Oryza sativa</taxon>
    </lineage>
</organism>
<comment type="function">
    <text evidence="1">Probable mannan synthase which consists of a 4-beta-mannosyltransferase activity on mannan using GDP-mannose. The beta-1,4-mannan product is the backbone for galactomannan synthesis by galactomannan galactosyltransferase. Galactomannan is a noncellulosic polysaccharides of plant cell wall.</text>
</comment>
<comment type="catalytic activity">
    <reaction evidence="1">
        <text>GDP-mannose + (glucomannan)n = GDP + (glucomannan)n+1.</text>
        <dbReference type="EC" id="2.4.1.32"/>
    </reaction>
</comment>
<comment type="subcellular location">
    <subcellularLocation>
        <location evidence="4">Golgi apparatus membrane</location>
        <topology evidence="4">Multi-pass membrane protein</topology>
    </subcellularLocation>
</comment>
<comment type="similarity">
    <text evidence="4">Belongs to the glycosyltransferase 2 family. Plant cellulose synthase-like A subfamily.</text>
</comment>
<comment type="sequence caution" evidence="4">
    <conflict type="erroneous gene model prediction">
        <sequence resource="EMBL-CDS" id="BAF20028"/>
    </conflict>
</comment>
<feature type="chain" id="PRO_0000319379" description="Probable glucomannan 4-beta-mannosyltransferase 9">
    <location>
        <begin position="1"/>
        <end position="527"/>
    </location>
</feature>
<feature type="transmembrane region" description="Helical" evidence="2">
    <location>
        <begin position="37"/>
        <end position="59"/>
    </location>
</feature>
<feature type="transmembrane region" description="Helical" evidence="2">
    <location>
        <begin position="363"/>
        <end position="383"/>
    </location>
</feature>
<feature type="transmembrane region" description="Helical" evidence="2">
    <location>
        <begin position="399"/>
        <end position="419"/>
    </location>
</feature>
<feature type="transmembrane region" description="Helical" evidence="2">
    <location>
        <begin position="478"/>
        <end position="498"/>
    </location>
</feature>
<feature type="transmembrane region" description="Helical" evidence="2">
    <location>
        <begin position="505"/>
        <end position="525"/>
    </location>
</feature>
<feature type="active site" evidence="2">
    <location>
        <position position="131"/>
    </location>
</feature>
<feature type="active site" evidence="2">
    <location>
        <position position="284"/>
    </location>
</feature>
<feature type="binding site" evidence="2">
    <location>
        <position position="190"/>
    </location>
    <ligand>
        <name>substrate</name>
    </ligand>
</feature>
<feature type="binding site" evidence="2">
    <location>
        <position position="192"/>
    </location>
    <ligand>
        <name>substrate</name>
    </ligand>
</feature>
<feature type="sequence conflict" description="In Ref. 6; AK242831." evidence="4" ref="6">
    <original>C</original>
    <variation>W</variation>
    <location>
        <position position="326"/>
    </location>
</feature>